<sequence length="319" mass="34663">MHTVTQTSLYGKDLLTLKDLSEEDINALLAEAGELKQNKIQPIFHGKTLAMIFEKSSTRTRVSFEAGMAQLGGSALFLSQKDLQLGRGETVADTAKVLSGYVDAIMIRTFEHEKVEELAKEADIPVINGLTDKYHPCQALADLLTIKEIKGKLKGVKVAYIGDGNNVAHSLMIGCAKMGCDISIASPKGYEVLDEAAEAAKTYALQSGSSVTLTDDPIEAVKDADVIYSDVFTSMGQEAEEQERLAVFAPYQVNAALVSHAKPDYTFLHCLPAHREEEVTAEIIDGPNSAVFQQAENRLHVQKALLKAILYKGESSKNC</sequence>
<gene>
    <name type="primary">argF</name>
    <name type="ordered locus">BSU11250</name>
</gene>
<accession>P18186</accession>
<reference key="1">
    <citation type="journal article" date="1990" name="Nucleic Acids Res.">
        <title>Nucleotide sequence of the Bacillus subtilis argF gene encoding ornithine carbamoyltransferase.</title>
        <authorList>
            <person name="Mountain A."/>
            <person name="Smith M.C.M."/>
            <person name="Baumberg S."/>
        </authorList>
    </citation>
    <scope>NUCLEOTIDE SEQUENCE [GENOMIC DNA]</scope>
    <scope>PARTIAL PROTEIN SEQUENCE</scope>
    <source>
        <strain>168 / EMG50</strain>
    </source>
</reference>
<reference key="2">
    <citation type="journal article" date="1994" name="Microbiology">
        <title>Sequence and analysis of the citrulline biosynthetic operon argC-F from Bacillus subtilis.</title>
        <authorList>
            <person name="O'Reilly M."/>
            <person name="Devine K.M."/>
        </authorList>
    </citation>
    <scope>NUCLEOTIDE SEQUENCE [GENOMIC DNA]</scope>
    <source>
        <strain>168</strain>
    </source>
</reference>
<reference key="3">
    <citation type="journal article" date="1997" name="Nature">
        <title>The complete genome sequence of the Gram-positive bacterium Bacillus subtilis.</title>
        <authorList>
            <person name="Kunst F."/>
            <person name="Ogasawara N."/>
            <person name="Moszer I."/>
            <person name="Albertini A.M."/>
            <person name="Alloni G."/>
            <person name="Azevedo V."/>
            <person name="Bertero M.G."/>
            <person name="Bessieres P."/>
            <person name="Bolotin A."/>
            <person name="Borchert S."/>
            <person name="Borriss R."/>
            <person name="Boursier L."/>
            <person name="Brans A."/>
            <person name="Braun M."/>
            <person name="Brignell S.C."/>
            <person name="Bron S."/>
            <person name="Brouillet S."/>
            <person name="Bruschi C.V."/>
            <person name="Caldwell B."/>
            <person name="Capuano V."/>
            <person name="Carter N.M."/>
            <person name="Choi S.-K."/>
            <person name="Codani J.-J."/>
            <person name="Connerton I.F."/>
            <person name="Cummings N.J."/>
            <person name="Daniel R.A."/>
            <person name="Denizot F."/>
            <person name="Devine K.M."/>
            <person name="Duesterhoeft A."/>
            <person name="Ehrlich S.D."/>
            <person name="Emmerson P.T."/>
            <person name="Entian K.-D."/>
            <person name="Errington J."/>
            <person name="Fabret C."/>
            <person name="Ferrari E."/>
            <person name="Foulger D."/>
            <person name="Fritz C."/>
            <person name="Fujita M."/>
            <person name="Fujita Y."/>
            <person name="Fuma S."/>
            <person name="Galizzi A."/>
            <person name="Galleron N."/>
            <person name="Ghim S.-Y."/>
            <person name="Glaser P."/>
            <person name="Goffeau A."/>
            <person name="Golightly E.J."/>
            <person name="Grandi G."/>
            <person name="Guiseppi G."/>
            <person name="Guy B.J."/>
            <person name="Haga K."/>
            <person name="Haiech J."/>
            <person name="Harwood C.R."/>
            <person name="Henaut A."/>
            <person name="Hilbert H."/>
            <person name="Holsappel S."/>
            <person name="Hosono S."/>
            <person name="Hullo M.-F."/>
            <person name="Itaya M."/>
            <person name="Jones L.-M."/>
            <person name="Joris B."/>
            <person name="Karamata D."/>
            <person name="Kasahara Y."/>
            <person name="Klaerr-Blanchard M."/>
            <person name="Klein C."/>
            <person name="Kobayashi Y."/>
            <person name="Koetter P."/>
            <person name="Koningstein G."/>
            <person name="Krogh S."/>
            <person name="Kumano M."/>
            <person name="Kurita K."/>
            <person name="Lapidus A."/>
            <person name="Lardinois S."/>
            <person name="Lauber J."/>
            <person name="Lazarevic V."/>
            <person name="Lee S.-M."/>
            <person name="Levine A."/>
            <person name="Liu H."/>
            <person name="Masuda S."/>
            <person name="Mauel C."/>
            <person name="Medigue C."/>
            <person name="Medina N."/>
            <person name="Mellado R.P."/>
            <person name="Mizuno M."/>
            <person name="Moestl D."/>
            <person name="Nakai S."/>
            <person name="Noback M."/>
            <person name="Noone D."/>
            <person name="O'Reilly M."/>
            <person name="Ogawa K."/>
            <person name="Ogiwara A."/>
            <person name="Oudega B."/>
            <person name="Park S.-H."/>
            <person name="Parro V."/>
            <person name="Pohl T.M."/>
            <person name="Portetelle D."/>
            <person name="Porwollik S."/>
            <person name="Prescott A.M."/>
            <person name="Presecan E."/>
            <person name="Pujic P."/>
            <person name="Purnelle B."/>
            <person name="Rapoport G."/>
            <person name="Rey M."/>
            <person name="Reynolds S."/>
            <person name="Rieger M."/>
            <person name="Rivolta C."/>
            <person name="Rocha E."/>
            <person name="Roche B."/>
            <person name="Rose M."/>
            <person name="Sadaie Y."/>
            <person name="Sato T."/>
            <person name="Scanlan E."/>
            <person name="Schleich S."/>
            <person name="Schroeter R."/>
            <person name="Scoffone F."/>
            <person name="Sekiguchi J."/>
            <person name="Sekowska A."/>
            <person name="Seror S.J."/>
            <person name="Serror P."/>
            <person name="Shin B.-S."/>
            <person name="Soldo B."/>
            <person name="Sorokin A."/>
            <person name="Tacconi E."/>
            <person name="Takagi T."/>
            <person name="Takahashi H."/>
            <person name="Takemaru K."/>
            <person name="Takeuchi M."/>
            <person name="Tamakoshi A."/>
            <person name="Tanaka T."/>
            <person name="Terpstra P."/>
            <person name="Tognoni A."/>
            <person name="Tosato V."/>
            <person name="Uchiyama S."/>
            <person name="Vandenbol M."/>
            <person name="Vannier F."/>
            <person name="Vassarotti A."/>
            <person name="Viari A."/>
            <person name="Wambutt R."/>
            <person name="Wedler E."/>
            <person name="Wedler H."/>
            <person name="Weitzenegger T."/>
            <person name="Winters P."/>
            <person name="Wipat A."/>
            <person name="Yamamoto H."/>
            <person name="Yamane K."/>
            <person name="Yasumoto K."/>
            <person name="Yata K."/>
            <person name="Yoshida K."/>
            <person name="Yoshikawa H.-F."/>
            <person name="Zumstein E."/>
            <person name="Yoshikawa H."/>
            <person name="Danchin A."/>
        </authorList>
    </citation>
    <scope>NUCLEOTIDE SEQUENCE [LARGE SCALE GENOMIC DNA]</scope>
    <source>
        <strain>168</strain>
    </source>
</reference>
<reference key="4">
    <citation type="journal article" date="1997" name="J. Bacteriol.">
        <title>A new Bacillus subtilis gene, med, encodes a positive regulator of comK.</title>
        <authorList>
            <person name="Ogura M."/>
            <person name="Ohshiro Y."/>
            <person name="Hirao S."/>
            <person name="Tanaka T."/>
        </authorList>
    </citation>
    <scope>NUCLEOTIDE SEQUENCE [GENOMIC DNA] OF 82-319</scope>
    <source>
        <strain>168 / CU741</strain>
    </source>
</reference>
<keyword id="KW-0028">Amino-acid biosynthesis</keyword>
<keyword id="KW-0055">Arginine biosynthesis</keyword>
<keyword id="KW-0963">Cytoplasm</keyword>
<keyword id="KW-0903">Direct protein sequencing</keyword>
<keyword id="KW-1185">Reference proteome</keyword>
<keyword id="KW-0808">Transferase</keyword>
<feature type="chain" id="PRO_0000112886" description="Ornithine carbamoyltransferase">
    <location>
        <begin position="1"/>
        <end position="319"/>
    </location>
</feature>
<feature type="binding site" evidence="2">
    <location>
        <begin position="57"/>
        <end position="60"/>
    </location>
    <ligand>
        <name>carbamoyl phosphate</name>
        <dbReference type="ChEBI" id="CHEBI:58228"/>
    </ligand>
</feature>
<feature type="binding site" evidence="2">
    <location>
        <position position="84"/>
    </location>
    <ligand>
        <name>carbamoyl phosphate</name>
        <dbReference type="ChEBI" id="CHEBI:58228"/>
    </ligand>
</feature>
<feature type="binding site" evidence="2">
    <location>
        <position position="108"/>
    </location>
    <ligand>
        <name>carbamoyl phosphate</name>
        <dbReference type="ChEBI" id="CHEBI:58228"/>
    </ligand>
</feature>
<feature type="binding site" evidence="2">
    <location>
        <begin position="135"/>
        <end position="138"/>
    </location>
    <ligand>
        <name>carbamoyl phosphate</name>
        <dbReference type="ChEBI" id="CHEBI:58228"/>
    </ligand>
</feature>
<feature type="binding site" evidence="2">
    <location>
        <position position="166"/>
    </location>
    <ligand>
        <name>L-ornithine</name>
        <dbReference type="ChEBI" id="CHEBI:46911"/>
    </ligand>
</feature>
<feature type="binding site" evidence="2">
    <location>
        <position position="230"/>
    </location>
    <ligand>
        <name>L-ornithine</name>
        <dbReference type="ChEBI" id="CHEBI:46911"/>
    </ligand>
</feature>
<feature type="binding site" evidence="2">
    <location>
        <begin position="234"/>
        <end position="235"/>
    </location>
    <ligand>
        <name>L-ornithine</name>
        <dbReference type="ChEBI" id="CHEBI:46911"/>
    </ligand>
</feature>
<feature type="binding site" evidence="2">
    <location>
        <begin position="270"/>
        <end position="271"/>
    </location>
    <ligand>
        <name>carbamoyl phosphate</name>
        <dbReference type="ChEBI" id="CHEBI:58228"/>
    </ligand>
</feature>
<feature type="binding site" evidence="2">
    <location>
        <position position="298"/>
    </location>
    <ligand>
        <name>carbamoyl phosphate</name>
        <dbReference type="ChEBI" id="CHEBI:58228"/>
    </ligand>
</feature>
<name>OTC_BACSU</name>
<evidence type="ECO:0000250" key="1"/>
<evidence type="ECO:0000255" key="2">
    <source>
        <dbReference type="HAMAP-Rule" id="MF_01109"/>
    </source>
</evidence>
<evidence type="ECO:0000305" key="3"/>
<proteinExistence type="evidence at protein level"/>
<comment type="function">
    <text evidence="1">Reversibly catalyzes the transfer of the carbamoyl group from carbamoyl phosphate (CP) to the N(epsilon) atom of ornithine (ORN) to produce L-citrulline.</text>
</comment>
<comment type="catalytic activity">
    <reaction>
        <text>carbamoyl phosphate + L-ornithine = L-citrulline + phosphate + H(+)</text>
        <dbReference type="Rhea" id="RHEA:19513"/>
        <dbReference type="ChEBI" id="CHEBI:15378"/>
        <dbReference type="ChEBI" id="CHEBI:43474"/>
        <dbReference type="ChEBI" id="CHEBI:46911"/>
        <dbReference type="ChEBI" id="CHEBI:57743"/>
        <dbReference type="ChEBI" id="CHEBI:58228"/>
        <dbReference type="EC" id="2.1.3.3"/>
    </reaction>
</comment>
<comment type="pathway">
    <text>Amino-acid biosynthesis; L-arginine biosynthesis; L-arginine from L-ornithine and carbamoyl phosphate: step 1/3.</text>
</comment>
<comment type="subcellular location">
    <subcellularLocation>
        <location evidence="3">Cytoplasm</location>
    </subcellularLocation>
</comment>
<comment type="similarity">
    <text evidence="3">Belongs to the aspartate/ornithine carbamoyltransferase superfamily. OTCase family.</text>
</comment>
<dbReference type="EC" id="2.1.3.3"/>
<dbReference type="EMBL" id="X53360">
    <property type="protein sequence ID" value="CAA37444.1"/>
    <property type="molecule type" value="Genomic_DNA"/>
</dbReference>
<dbReference type="EMBL" id="Z26919">
    <property type="protein sequence ID" value="CAA81542.1"/>
    <property type="molecule type" value="Genomic_DNA"/>
</dbReference>
<dbReference type="EMBL" id="AL009126">
    <property type="protein sequence ID" value="CAB12966.1"/>
    <property type="molecule type" value="Genomic_DNA"/>
</dbReference>
<dbReference type="EMBL" id="D86376">
    <property type="protein sequence ID" value="BAA22924.1"/>
    <property type="molecule type" value="Genomic_DNA"/>
</dbReference>
<dbReference type="PIR" id="S11000">
    <property type="entry name" value="OWBS"/>
</dbReference>
<dbReference type="RefSeq" id="NP_389007.1">
    <property type="nucleotide sequence ID" value="NC_000964.3"/>
</dbReference>
<dbReference type="RefSeq" id="WP_003232980.1">
    <property type="nucleotide sequence ID" value="NZ_OZ025638.1"/>
</dbReference>
<dbReference type="SMR" id="P18186"/>
<dbReference type="FunCoup" id="P18186">
    <property type="interactions" value="622"/>
</dbReference>
<dbReference type="STRING" id="224308.BSU11250"/>
<dbReference type="PaxDb" id="224308-BSU11250"/>
<dbReference type="EnsemblBacteria" id="CAB12966">
    <property type="protein sequence ID" value="CAB12966"/>
    <property type="gene ID" value="BSU_11250"/>
</dbReference>
<dbReference type="GeneID" id="936386"/>
<dbReference type="KEGG" id="bsu:BSU11250"/>
<dbReference type="PATRIC" id="fig|224308.179.peg.1210"/>
<dbReference type="eggNOG" id="COG0078">
    <property type="taxonomic scope" value="Bacteria"/>
</dbReference>
<dbReference type="InParanoid" id="P18186"/>
<dbReference type="OrthoDB" id="9802587at2"/>
<dbReference type="PhylomeDB" id="P18186"/>
<dbReference type="BioCyc" id="BSUB:BSU11250-MONOMER"/>
<dbReference type="BioCyc" id="MetaCyc:ARGFBACSU-MONOMER"/>
<dbReference type="SABIO-RK" id="P18186"/>
<dbReference type="UniPathway" id="UPA00068">
    <property type="reaction ID" value="UER00112"/>
</dbReference>
<dbReference type="Proteomes" id="UP000001570">
    <property type="component" value="Chromosome"/>
</dbReference>
<dbReference type="GO" id="GO:0005737">
    <property type="term" value="C:cytoplasm"/>
    <property type="evidence" value="ECO:0007669"/>
    <property type="project" value="UniProtKB-SubCell"/>
</dbReference>
<dbReference type="GO" id="GO:0016597">
    <property type="term" value="F:amino acid binding"/>
    <property type="evidence" value="ECO:0007669"/>
    <property type="project" value="InterPro"/>
</dbReference>
<dbReference type="GO" id="GO:0004585">
    <property type="term" value="F:ornithine carbamoyltransferase activity"/>
    <property type="evidence" value="ECO:0000318"/>
    <property type="project" value="GO_Central"/>
</dbReference>
<dbReference type="GO" id="GO:0042450">
    <property type="term" value="P:arginine biosynthetic process via ornithine"/>
    <property type="evidence" value="ECO:0000318"/>
    <property type="project" value="GO_Central"/>
</dbReference>
<dbReference type="GO" id="GO:0019240">
    <property type="term" value="P:citrulline biosynthetic process"/>
    <property type="evidence" value="ECO:0000318"/>
    <property type="project" value="GO_Central"/>
</dbReference>
<dbReference type="GO" id="GO:0006526">
    <property type="term" value="P:L-arginine biosynthetic process"/>
    <property type="evidence" value="ECO:0007669"/>
    <property type="project" value="UniProtKB-UniRule"/>
</dbReference>
<dbReference type="FunFam" id="3.40.50.1370:FF:000008">
    <property type="entry name" value="Ornithine carbamoyltransferase"/>
    <property type="match status" value="1"/>
</dbReference>
<dbReference type="FunFam" id="3.40.50.1370:FF:000016">
    <property type="entry name" value="Ornithine carbamoyltransferase"/>
    <property type="match status" value="1"/>
</dbReference>
<dbReference type="Gene3D" id="3.40.50.1370">
    <property type="entry name" value="Aspartate/ornithine carbamoyltransferase"/>
    <property type="match status" value="2"/>
</dbReference>
<dbReference type="HAMAP" id="MF_01109">
    <property type="entry name" value="OTCase"/>
    <property type="match status" value="1"/>
</dbReference>
<dbReference type="InterPro" id="IPR006132">
    <property type="entry name" value="Asp/Orn_carbamoyltranf_P-bd"/>
</dbReference>
<dbReference type="InterPro" id="IPR006130">
    <property type="entry name" value="Asp/Orn_carbamoylTrfase"/>
</dbReference>
<dbReference type="InterPro" id="IPR036901">
    <property type="entry name" value="Asp/Orn_carbamoylTrfase_sf"/>
</dbReference>
<dbReference type="InterPro" id="IPR006131">
    <property type="entry name" value="Asp_carbamoyltransf_Asp/Orn-bd"/>
</dbReference>
<dbReference type="InterPro" id="IPR002292">
    <property type="entry name" value="Orn/put_carbamltrans"/>
</dbReference>
<dbReference type="InterPro" id="IPR024904">
    <property type="entry name" value="OTCase_ArgI"/>
</dbReference>
<dbReference type="NCBIfam" id="TIGR00658">
    <property type="entry name" value="orni_carb_tr"/>
    <property type="match status" value="1"/>
</dbReference>
<dbReference type="NCBIfam" id="NF001986">
    <property type="entry name" value="PRK00779.1"/>
    <property type="match status" value="1"/>
</dbReference>
<dbReference type="PANTHER" id="PTHR45753">
    <property type="entry name" value="ORNITHINE CARBAMOYLTRANSFERASE, MITOCHONDRIAL"/>
    <property type="match status" value="1"/>
</dbReference>
<dbReference type="PANTHER" id="PTHR45753:SF3">
    <property type="entry name" value="ORNITHINE TRANSCARBAMYLASE, MITOCHONDRIAL"/>
    <property type="match status" value="1"/>
</dbReference>
<dbReference type="Pfam" id="PF00185">
    <property type="entry name" value="OTCace"/>
    <property type="match status" value="1"/>
</dbReference>
<dbReference type="Pfam" id="PF02729">
    <property type="entry name" value="OTCace_N"/>
    <property type="match status" value="1"/>
</dbReference>
<dbReference type="PRINTS" id="PR00100">
    <property type="entry name" value="AOTCASE"/>
</dbReference>
<dbReference type="PRINTS" id="PR00102">
    <property type="entry name" value="OTCASE"/>
</dbReference>
<dbReference type="SUPFAM" id="SSF53671">
    <property type="entry name" value="Aspartate/ornithine carbamoyltransferase"/>
    <property type="match status" value="1"/>
</dbReference>
<dbReference type="PROSITE" id="PS00097">
    <property type="entry name" value="CARBAMOYLTRANSFERASE"/>
    <property type="match status" value="1"/>
</dbReference>
<organism>
    <name type="scientific">Bacillus subtilis (strain 168)</name>
    <dbReference type="NCBI Taxonomy" id="224308"/>
    <lineage>
        <taxon>Bacteria</taxon>
        <taxon>Bacillati</taxon>
        <taxon>Bacillota</taxon>
        <taxon>Bacilli</taxon>
        <taxon>Bacillales</taxon>
        <taxon>Bacillaceae</taxon>
        <taxon>Bacillus</taxon>
    </lineage>
</organism>
<protein>
    <recommendedName>
        <fullName>Ornithine carbamoyltransferase</fullName>
        <shortName>OTCase</shortName>
        <ecNumber>2.1.3.3</ecNumber>
    </recommendedName>
</protein>